<feature type="chain" id="PRO_0000132581" description="Small ribosomal subunit protein uS4c">
    <location>
        <begin position="1"/>
        <end position="207"/>
    </location>
</feature>
<feature type="domain" description="S4 RNA-binding">
    <location>
        <begin position="92"/>
        <end position="155"/>
    </location>
</feature>
<sequence length="207" mass="23857">MSRYRGPRLRIIRRLRNLPGLTNKLVESKKNKVSGSDQSIQKKVSQYCIRLEAKQRLRFNYGLTERQLLNYVRIARCAKGSTGQILLQLLEMRLDNILFRLGVVPTIPSARQLINHRHILVNNRIVDVPSFHCKPKDIITIGAPKTYQSILSKRIESFAKDQVPEHLTLSLSEPKKPKGLVNYLINRESIGLTINELLVVEYYSRKA</sequence>
<gene>
    <name type="primary">rps4</name>
</gene>
<accession>Q6H9K5</accession>
<name>RR4_EQUSC</name>
<proteinExistence type="inferred from homology"/>
<keyword id="KW-0150">Chloroplast</keyword>
<keyword id="KW-0934">Plastid</keyword>
<keyword id="KW-0687">Ribonucleoprotein</keyword>
<keyword id="KW-0689">Ribosomal protein</keyword>
<keyword id="KW-0694">RNA-binding</keyword>
<keyword id="KW-0699">rRNA-binding</keyword>
<dbReference type="EMBL" id="AJ583688">
    <property type="protein sequence ID" value="CAE47542.1"/>
    <property type="molecule type" value="Genomic_DNA"/>
</dbReference>
<dbReference type="SMR" id="Q6H9K5"/>
<dbReference type="GO" id="GO:0009507">
    <property type="term" value="C:chloroplast"/>
    <property type="evidence" value="ECO:0007669"/>
    <property type="project" value="UniProtKB-SubCell"/>
</dbReference>
<dbReference type="GO" id="GO:0015935">
    <property type="term" value="C:small ribosomal subunit"/>
    <property type="evidence" value="ECO:0007669"/>
    <property type="project" value="InterPro"/>
</dbReference>
<dbReference type="GO" id="GO:0019843">
    <property type="term" value="F:rRNA binding"/>
    <property type="evidence" value="ECO:0007669"/>
    <property type="project" value="UniProtKB-UniRule"/>
</dbReference>
<dbReference type="GO" id="GO:0003735">
    <property type="term" value="F:structural constituent of ribosome"/>
    <property type="evidence" value="ECO:0007669"/>
    <property type="project" value="InterPro"/>
</dbReference>
<dbReference type="GO" id="GO:0042274">
    <property type="term" value="P:ribosomal small subunit biogenesis"/>
    <property type="evidence" value="ECO:0007669"/>
    <property type="project" value="TreeGrafter"/>
</dbReference>
<dbReference type="GO" id="GO:0006412">
    <property type="term" value="P:translation"/>
    <property type="evidence" value="ECO:0007669"/>
    <property type="project" value="UniProtKB-UniRule"/>
</dbReference>
<dbReference type="CDD" id="cd00165">
    <property type="entry name" value="S4"/>
    <property type="match status" value="1"/>
</dbReference>
<dbReference type="FunFam" id="3.10.290.10:FF:000001">
    <property type="entry name" value="30S ribosomal protein S4"/>
    <property type="match status" value="1"/>
</dbReference>
<dbReference type="FunFam" id="1.10.1050.10:FF:000002">
    <property type="entry name" value="30S ribosomal protein S4, chloroplastic"/>
    <property type="match status" value="1"/>
</dbReference>
<dbReference type="Gene3D" id="1.10.1050.10">
    <property type="entry name" value="Ribosomal Protein S4 Delta 41, Chain A, domain 1"/>
    <property type="match status" value="1"/>
</dbReference>
<dbReference type="Gene3D" id="3.10.290.10">
    <property type="entry name" value="RNA-binding S4 domain"/>
    <property type="match status" value="1"/>
</dbReference>
<dbReference type="HAMAP" id="MF_01306_B">
    <property type="entry name" value="Ribosomal_uS4_B"/>
    <property type="match status" value="1"/>
</dbReference>
<dbReference type="InterPro" id="IPR022801">
    <property type="entry name" value="Ribosomal_uS4"/>
</dbReference>
<dbReference type="InterPro" id="IPR005709">
    <property type="entry name" value="Ribosomal_uS4_bac-type"/>
</dbReference>
<dbReference type="InterPro" id="IPR018079">
    <property type="entry name" value="Ribosomal_uS4_CS"/>
</dbReference>
<dbReference type="InterPro" id="IPR001912">
    <property type="entry name" value="Ribosomal_uS4_N"/>
</dbReference>
<dbReference type="InterPro" id="IPR002942">
    <property type="entry name" value="S4_RNA-bd"/>
</dbReference>
<dbReference type="InterPro" id="IPR036986">
    <property type="entry name" value="S4_RNA-bd_sf"/>
</dbReference>
<dbReference type="NCBIfam" id="NF003717">
    <property type="entry name" value="PRK05327.1"/>
    <property type="match status" value="1"/>
</dbReference>
<dbReference type="NCBIfam" id="TIGR01017">
    <property type="entry name" value="rpsD_bact"/>
    <property type="match status" value="1"/>
</dbReference>
<dbReference type="PANTHER" id="PTHR11831">
    <property type="entry name" value="30S 40S RIBOSOMAL PROTEIN"/>
    <property type="match status" value="1"/>
</dbReference>
<dbReference type="PANTHER" id="PTHR11831:SF4">
    <property type="entry name" value="SMALL RIBOSOMAL SUBUNIT PROTEIN US4M"/>
    <property type="match status" value="1"/>
</dbReference>
<dbReference type="Pfam" id="PF00163">
    <property type="entry name" value="Ribosomal_S4"/>
    <property type="match status" value="1"/>
</dbReference>
<dbReference type="Pfam" id="PF01479">
    <property type="entry name" value="S4"/>
    <property type="match status" value="1"/>
</dbReference>
<dbReference type="SMART" id="SM01390">
    <property type="entry name" value="Ribosomal_S4"/>
    <property type="match status" value="1"/>
</dbReference>
<dbReference type="SMART" id="SM00363">
    <property type="entry name" value="S4"/>
    <property type="match status" value="1"/>
</dbReference>
<dbReference type="SUPFAM" id="SSF55174">
    <property type="entry name" value="Alpha-L RNA-binding motif"/>
    <property type="match status" value="1"/>
</dbReference>
<dbReference type="PROSITE" id="PS00632">
    <property type="entry name" value="RIBOSOMAL_S4"/>
    <property type="match status" value="1"/>
</dbReference>
<dbReference type="PROSITE" id="PS50889">
    <property type="entry name" value="S4"/>
    <property type="match status" value="1"/>
</dbReference>
<evidence type="ECO:0000250" key="1"/>
<evidence type="ECO:0000305" key="2"/>
<geneLocation type="chloroplast"/>
<reference key="1">
    <citation type="journal article" date="2004" name="Syst. Bot.">
        <title>Phylogeny of horsetails (Equisetum) based on the chloroplast rps4 gene and adjacent noncoding sequences.</title>
        <authorList>
            <person name="Guillon J.-M."/>
        </authorList>
        <dbReference type="AGRICOLA" id="IND43653535"/>
    </citation>
    <scope>NUCLEOTIDE SEQUENCE [GENOMIC DNA]</scope>
</reference>
<organism>
    <name type="scientific">Equisetum scirpoides</name>
    <name type="common">Dwarf-scouring rush</name>
    <name type="synonym">Hippochaete scirpoides</name>
    <dbReference type="NCBI Taxonomy" id="3261"/>
    <lineage>
        <taxon>Eukaryota</taxon>
        <taxon>Viridiplantae</taxon>
        <taxon>Streptophyta</taxon>
        <taxon>Embryophyta</taxon>
        <taxon>Tracheophyta</taxon>
        <taxon>Polypodiopsida</taxon>
        <taxon>Equisetidae</taxon>
        <taxon>Equisetales</taxon>
        <taxon>Equisetaceae</taxon>
        <taxon>Equisetum</taxon>
    </lineage>
</organism>
<protein>
    <recommendedName>
        <fullName evidence="2">Small ribosomal subunit protein uS4c</fullName>
    </recommendedName>
    <alternativeName>
        <fullName>30S ribosomal protein S4, chloroplastic</fullName>
    </alternativeName>
</protein>
<comment type="function">
    <text evidence="1">One of the primary rRNA binding proteins, it binds directly to 16S rRNA where it nucleates assembly of the body of the 30S subunit.</text>
</comment>
<comment type="function">
    <text evidence="1">With S5 and S12 plays an important role in translational accuracy.</text>
</comment>
<comment type="subunit">
    <text evidence="1">Part of the 30S ribosomal subunit. Contacts protein S5. The interaction surface between S4 and S5 is involved in control of translational fidelity (By similarity).</text>
</comment>
<comment type="subcellular location">
    <subcellularLocation>
        <location>Plastid</location>
        <location>Chloroplast</location>
    </subcellularLocation>
</comment>
<comment type="similarity">
    <text evidence="2">Belongs to the universal ribosomal protein uS4 family.</text>
</comment>